<gene>
    <name evidence="1" type="primary">rpsB</name>
    <name evidence="1" type="synonym">rps2</name>
    <name type="ordered locus">UU026</name>
</gene>
<proteinExistence type="inferred from homology"/>
<feature type="chain" id="PRO_0000134270" description="Small ribosomal subunit protein uS2">
    <location>
        <begin position="1"/>
        <end position="349"/>
    </location>
</feature>
<feature type="region of interest" description="Disordered" evidence="2">
    <location>
        <begin position="302"/>
        <end position="334"/>
    </location>
</feature>
<sequence length="349" mass="39123">MSQMENSTKKVESVANVEVVTTENAKVEQKPTSPADAIQLKVNANSTIKNLKTLVSIVKLTESGAHIGLNPKKWNPKMASYIHAKRSNNHVIDILKTILFLDRAYKFLQEVSQNGGTVMFVGTRGRVVKELIKAEAERTNSFYVTQRWLGGTLTNFTNISRSLKKFNSNLALLESEEINKYSKKEQIAINKETAKLEKFYGGIKNMKQRPDVLILVDPVNDVNAIKEARKLNIPVIALANTNADPQLIDYIIPVNNYSVKSITLILGVLADSIAELHGEPTKIVGRPDSEIVLPETKSNWKQNNYDPSKRGYNPKYVNHKSTFNKFNNKKPVDSTTNEIKTNVIKAETK</sequence>
<reference key="1">
    <citation type="journal article" date="2000" name="Nature">
        <title>The complete sequence of the mucosal pathogen Ureaplasma urealyticum.</title>
        <authorList>
            <person name="Glass J.I."/>
            <person name="Lefkowitz E.J."/>
            <person name="Glass J.S."/>
            <person name="Heiner C.R."/>
            <person name="Chen E.Y."/>
            <person name="Cassell G.H."/>
        </authorList>
    </citation>
    <scope>NUCLEOTIDE SEQUENCE [LARGE SCALE GENOMIC DNA]</scope>
    <source>
        <strain>ATCC 700970</strain>
    </source>
</reference>
<keyword id="KW-1185">Reference proteome</keyword>
<keyword id="KW-0687">Ribonucleoprotein</keyword>
<keyword id="KW-0689">Ribosomal protein</keyword>
<evidence type="ECO:0000255" key="1">
    <source>
        <dbReference type="HAMAP-Rule" id="MF_00291"/>
    </source>
</evidence>
<evidence type="ECO:0000256" key="2">
    <source>
        <dbReference type="SAM" id="MobiDB-lite"/>
    </source>
</evidence>
<evidence type="ECO:0000305" key="3"/>
<protein>
    <recommendedName>
        <fullName evidence="1">Small ribosomal subunit protein uS2</fullName>
    </recommendedName>
    <alternativeName>
        <fullName evidence="3">30S ribosomal protein S2</fullName>
    </alternativeName>
</protein>
<name>RS2_UREPA</name>
<comment type="similarity">
    <text evidence="1">Belongs to the universal ribosomal protein uS2 family.</text>
</comment>
<accession>Q9PRB9</accession>
<organism>
    <name type="scientific">Ureaplasma parvum serovar 3 (strain ATCC 700970)</name>
    <dbReference type="NCBI Taxonomy" id="273119"/>
    <lineage>
        <taxon>Bacteria</taxon>
        <taxon>Bacillati</taxon>
        <taxon>Mycoplasmatota</taxon>
        <taxon>Mycoplasmoidales</taxon>
        <taxon>Mycoplasmoidaceae</taxon>
        <taxon>Ureaplasma</taxon>
    </lineage>
</organism>
<dbReference type="EMBL" id="AF222894">
    <property type="protein sequence ID" value="AAF30431.1"/>
    <property type="molecule type" value="Genomic_DNA"/>
</dbReference>
<dbReference type="RefSeq" id="WP_010891651.1">
    <property type="nucleotide sequence ID" value="NC_002162.1"/>
</dbReference>
<dbReference type="SMR" id="Q9PRB9"/>
<dbReference type="STRING" id="273119.UU026"/>
<dbReference type="EnsemblBacteria" id="AAF30431">
    <property type="protein sequence ID" value="AAF30431"/>
    <property type="gene ID" value="UU026"/>
</dbReference>
<dbReference type="GeneID" id="29672142"/>
<dbReference type="KEGG" id="uur:UU026"/>
<dbReference type="PATRIC" id="fig|273119.6.peg.26"/>
<dbReference type="eggNOG" id="COG0052">
    <property type="taxonomic scope" value="Bacteria"/>
</dbReference>
<dbReference type="HOGENOM" id="CLU_040318_0_0_14"/>
<dbReference type="OrthoDB" id="9808036at2"/>
<dbReference type="Proteomes" id="UP000000423">
    <property type="component" value="Chromosome"/>
</dbReference>
<dbReference type="GO" id="GO:0022627">
    <property type="term" value="C:cytosolic small ribosomal subunit"/>
    <property type="evidence" value="ECO:0007669"/>
    <property type="project" value="TreeGrafter"/>
</dbReference>
<dbReference type="GO" id="GO:0003735">
    <property type="term" value="F:structural constituent of ribosome"/>
    <property type="evidence" value="ECO:0007669"/>
    <property type="project" value="InterPro"/>
</dbReference>
<dbReference type="GO" id="GO:0006412">
    <property type="term" value="P:translation"/>
    <property type="evidence" value="ECO:0007669"/>
    <property type="project" value="UniProtKB-UniRule"/>
</dbReference>
<dbReference type="CDD" id="cd01425">
    <property type="entry name" value="RPS2"/>
    <property type="match status" value="1"/>
</dbReference>
<dbReference type="Gene3D" id="3.40.50.10490">
    <property type="entry name" value="Glucose-6-phosphate isomerase like protein, domain 1"/>
    <property type="match status" value="1"/>
</dbReference>
<dbReference type="Gene3D" id="1.10.287.610">
    <property type="entry name" value="Helix hairpin bin"/>
    <property type="match status" value="1"/>
</dbReference>
<dbReference type="HAMAP" id="MF_00291_B">
    <property type="entry name" value="Ribosomal_uS2_B"/>
    <property type="match status" value="1"/>
</dbReference>
<dbReference type="InterPro" id="IPR001865">
    <property type="entry name" value="Ribosomal_uS2"/>
</dbReference>
<dbReference type="InterPro" id="IPR005706">
    <property type="entry name" value="Ribosomal_uS2_bac/mit/plastid"/>
</dbReference>
<dbReference type="InterPro" id="IPR018130">
    <property type="entry name" value="Ribosomal_uS2_CS"/>
</dbReference>
<dbReference type="InterPro" id="IPR023591">
    <property type="entry name" value="Ribosomal_uS2_flav_dom_sf"/>
</dbReference>
<dbReference type="NCBIfam" id="TIGR01011">
    <property type="entry name" value="rpsB_bact"/>
    <property type="match status" value="1"/>
</dbReference>
<dbReference type="PANTHER" id="PTHR12534">
    <property type="entry name" value="30S RIBOSOMAL PROTEIN S2 PROKARYOTIC AND ORGANELLAR"/>
    <property type="match status" value="1"/>
</dbReference>
<dbReference type="PANTHER" id="PTHR12534:SF0">
    <property type="entry name" value="SMALL RIBOSOMAL SUBUNIT PROTEIN US2M"/>
    <property type="match status" value="1"/>
</dbReference>
<dbReference type="Pfam" id="PF00318">
    <property type="entry name" value="Ribosomal_S2"/>
    <property type="match status" value="1"/>
</dbReference>
<dbReference type="PRINTS" id="PR00395">
    <property type="entry name" value="RIBOSOMALS2"/>
</dbReference>
<dbReference type="SUPFAM" id="SSF52313">
    <property type="entry name" value="Ribosomal protein S2"/>
    <property type="match status" value="1"/>
</dbReference>
<dbReference type="PROSITE" id="PS00963">
    <property type="entry name" value="RIBOSOMAL_S2_2"/>
    <property type="match status" value="1"/>
</dbReference>